<name>PTBP2_HUMAN</name>
<evidence type="ECO:0000250" key="1">
    <source>
        <dbReference type="UniProtKB" id="Q91Z31"/>
    </source>
</evidence>
<evidence type="ECO:0000255" key="2">
    <source>
        <dbReference type="PROSITE-ProRule" id="PRU00176"/>
    </source>
</evidence>
<evidence type="ECO:0000269" key="3">
    <source>
    </source>
</evidence>
<evidence type="ECO:0000269" key="4">
    <source>
    </source>
</evidence>
<evidence type="ECO:0000269" key="5">
    <source>
    </source>
</evidence>
<evidence type="ECO:0000269" key="6">
    <source>
    </source>
</evidence>
<evidence type="ECO:0000303" key="7">
    <source>
    </source>
</evidence>
<evidence type="ECO:0000303" key="8">
    <source>
    </source>
</evidence>
<evidence type="ECO:0000303" key="9">
    <source>
    </source>
</evidence>
<evidence type="ECO:0000305" key="10"/>
<evidence type="ECO:0000312" key="11">
    <source>
        <dbReference type="HGNC" id="HGNC:17662"/>
    </source>
</evidence>
<evidence type="ECO:0007744" key="12">
    <source>
    </source>
</evidence>
<evidence type="ECO:0007744" key="13">
    <source>
    </source>
</evidence>
<evidence type="ECO:0007744" key="14">
    <source>
    </source>
</evidence>
<evidence type="ECO:0007829" key="15">
    <source>
        <dbReference type="PDB" id="2CQ1"/>
    </source>
</evidence>
<evidence type="ECO:0007829" key="16">
    <source>
        <dbReference type="PDB" id="2MJU"/>
    </source>
</evidence>
<evidence type="ECO:0007829" key="17">
    <source>
        <dbReference type="PDB" id="4CQ1"/>
    </source>
</evidence>
<organism>
    <name type="scientific">Homo sapiens</name>
    <name type="common">Human</name>
    <dbReference type="NCBI Taxonomy" id="9606"/>
    <lineage>
        <taxon>Eukaryota</taxon>
        <taxon>Metazoa</taxon>
        <taxon>Chordata</taxon>
        <taxon>Craniata</taxon>
        <taxon>Vertebrata</taxon>
        <taxon>Euteleostomi</taxon>
        <taxon>Mammalia</taxon>
        <taxon>Eutheria</taxon>
        <taxon>Euarchontoglires</taxon>
        <taxon>Primates</taxon>
        <taxon>Haplorrhini</taxon>
        <taxon>Catarrhini</taxon>
        <taxon>Hominidae</taxon>
        <taxon>Homo</taxon>
    </lineage>
</organism>
<feature type="chain" id="PRO_0000232928" description="Polypyrimidine tract-binding protein 2">
    <location>
        <begin position="1"/>
        <end position="531"/>
    </location>
</feature>
<feature type="domain" description="RRM 1" evidence="2">
    <location>
        <begin position="59"/>
        <end position="133"/>
    </location>
</feature>
<feature type="domain" description="RRM 2" evidence="2">
    <location>
        <begin position="181"/>
        <end position="257"/>
    </location>
</feature>
<feature type="domain" description="RRM 3" evidence="2">
    <location>
        <begin position="338"/>
        <end position="412"/>
    </location>
</feature>
<feature type="domain" description="RRM 4" evidence="2">
    <location>
        <begin position="455"/>
        <end position="529"/>
    </location>
</feature>
<feature type="modified residue" description="N-acetylmethionine" evidence="12 14">
    <location>
        <position position="1"/>
    </location>
</feature>
<feature type="modified residue" description="Phosphoserine" evidence="1">
    <location>
        <position position="26"/>
    </location>
</feature>
<feature type="modified residue" description="Phosphoserine" evidence="1">
    <location>
        <position position="27"/>
    </location>
</feature>
<feature type="modified residue" description="Phosphoserine" evidence="13">
    <location>
        <position position="308"/>
    </location>
</feature>
<feature type="splice variant" id="VSP_018015" description="In isoform 3, isoform 4 and isoform 6." evidence="8">
    <original>A</original>
    <variation>GLPVAA</variation>
    <location>
        <position position="302"/>
    </location>
</feature>
<feature type="splice variant" id="VSP_018016" description="In isoform 5 and isoform 6." evidence="7 8">
    <original>MVTPQSLF</original>
    <variation>VFMEMCSV</variation>
    <location>
        <begin position="349"/>
        <end position="356"/>
    </location>
</feature>
<feature type="splice variant" id="VSP_018017" description="In isoform 5 and isoform 6." evidence="7 8">
    <location>
        <begin position="357"/>
        <end position="531"/>
    </location>
</feature>
<feature type="splice variant" id="VSP_018018" description="In isoform 2 and isoform 3." evidence="7 8 9">
    <original>Q</original>
    <variation>QR</variation>
    <location>
        <position position="489"/>
    </location>
</feature>
<feature type="strand" evidence="15">
    <location>
        <begin position="59"/>
        <end position="65"/>
    </location>
</feature>
<feature type="helix" evidence="15">
    <location>
        <begin position="72"/>
        <end position="77"/>
    </location>
</feature>
<feature type="turn" evidence="15">
    <location>
        <begin position="78"/>
        <end position="82"/>
    </location>
</feature>
<feature type="strand" evidence="15">
    <location>
        <begin position="85"/>
        <end position="91"/>
    </location>
</feature>
<feature type="turn" evidence="15">
    <location>
        <begin position="92"/>
        <end position="95"/>
    </location>
</feature>
<feature type="strand" evidence="15">
    <location>
        <begin position="96"/>
        <end position="103"/>
    </location>
</feature>
<feature type="helix" evidence="15">
    <location>
        <begin position="104"/>
        <end position="116"/>
    </location>
</feature>
<feature type="strand" evidence="15">
    <location>
        <begin position="127"/>
        <end position="130"/>
    </location>
</feature>
<feature type="strand" evidence="17">
    <location>
        <begin position="339"/>
        <end position="344"/>
    </location>
</feature>
<feature type="turn" evidence="17">
    <location>
        <begin position="347"/>
        <end position="349"/>
    </location>
</feature>
<feature type="helix" evidence="17">
    <location>
        <begin position="352"/>
        <end position="359"/>
    </location>
</feature>
<feature type="turn" evidence="17">
    <location>
        <begin position="360"/>
        <end position="362"/>
    </location>
</feature>
<feature type="strand" evidence="17">
    <location>
        <begin position="365"/>
        <end position="371"/>
    </location>
</feature>
<feature type="strand" evidence="17">
    <location>
        <begin position="374"/>
        <end position="384"/>
    </location>
</feature>
<feature type="helix" evidence="17">
    <location>
        <begin position="385"/>
        <end position="395"/>
    </location>
</feature>
<feature type="strand" evidence="16">
    <location>
        <begin position="400"/>
        <end position="403"/>
    </location>
</feature>
<feature type="strand" evidence="17">
    <location>
        <begin position="406"/>
        <end position="409"/>
    </location>
</feature>
<feature type="strand" evidence="16">
    <location>
        <begin position="419"/>
        <end position="422"/>
    </location>
</feature>
<feature type="turn" evidence="16">
    <location>
        <begin position="423"/>
        <end position="425"/>
    </location>
</feature>
<feature type="strand" evidence="17">
    <location>
        <begin position="428"/>
        <end position="430"/>
    </location>
</feature>
<feature type="helix" evidence="16">
    <location>
        <begin position="431"/>
        <end position="433"/>
    </location>
</feature>
<feature type="helix" evidence="17">
    <location>
        <begin position="444"/>
        <end position="446"/>
    </location>
</feature>
<feature type="strand" evidence="16">
    <location>
        <begin position="447"/>
        <end position="450"/>
    </location>
</feature>
<feature type="strand" evidence="17">
    <location>
        <begin position="455"/>
        <end position="460"/>
    </location>
</feature>
<feature type="helix" evidence="17">
    <location>
        <begin position="468"/>
        <end position="476"/>
    </location>
</feature>
<feature type="turn" evidence="17">
    <location>
        <begin position="477"/>
        <end position="479"/>
    </location>
</feature>
<feature type="strand" evidence="17">
    <location>
        <begin position="482"/>
        <end position="487"/>
    </location>
</feature>
<feature type="strand" evidence="17">
    <location>
        <begin position="494"/>
        <end position="500"/>
    </location>
</feature>
<feature type="helix" evidence="17">
    <location>
        <begin position="501"/>
        <end position="511"/>
    </location>
</feature>
<feature type="strand" evidence="17">
    <location>
        <begin position="515"/>
        <end position="517"/>
    </location>
</feature>
<feature type="strand" evidence="17">
    <location>
        <begin position="523"/>
        <end position="526"/>
    </location>
</feature>
<reference key="1">
    <citation type="journal article" date="2000" name="Mol. Cell. Biol.">
        <title>Cooperative assembly of an hnRNP complex induced by a tissue-specific homolog of polypyrimidine tract binding protein.</title>
        <authorList>
            <person name="Markovtsov V."/>
            <person name="Nikolic J.M."/>
            <person name="Goldman J.A."/>
            <person name="Turck C.W."/>
            <person name="Chou M.-Y."/>
            <person name="Black D.L."/>
        </authorList>
    </citation>
    <scope>NUCLEOTIDE SEQUENCE [MRNA] (ISOFORM 1)</scope>
    <scope>PROTEIN SEQUENCE OF 55-65; 210-215; 216-235; 370-374; 404-411; 431-440 AND 487-492</scope>
    <scope>FUNCTION</scope>
    <scope>TISSUE SPECIFICITY</scope>
    <scope>INTERACTION WITH HNRPH1 AND KHSRP</scope>
    <source>
        <tissue>Retinoblastoma</tissue>
    </source>
</reference>
<reference key="2">
    <citation type="journal article" date="2001" name="J. Neuroimmunol.">
        <title>Molecular cloning and characterization of human PTB-like protein: a possible retinal autoantigen of cancer-associated retinopathy.</title>
        <authorList>
            <person name="Tateiwa H."/>
            <person name="Gotoh N."/>
            <person name="Ichikawa M."/>
            <person name="Kikuchi T."/>
            <person name="Yoshimura N."/>
        </authorList>
    </citation>
    <scope>NUCLEOTIDE SEQUENCE [MRNA] (ISOFORMS 2 AND 5)</scope>
    <scope>ALTERNATIVE SPLICING (ISOFORMS 3 AND 6)</scope>
    <source>
        <tissue>Retina</tissue>
    </source>
</reference>
<reference key="3">
    <citation type="journal article" date="2002" name="Genomics">
        <title>Alternative splicing of brain-specific PTB defines a tissue-specific isoform pattern that predicts distinct functional roles.</title>
        <authorList>
            <person name="Rahman L."/>
            <person name="Bliskovski V."/>
            <person name="Reinhold W."/>
            <person name="Zajac-Kaye M."/>
        </authorList>
    </citation>
    <scope>NUCLEOTIDE SEQUENCE [MRNA] (ISOFORMS 1; 3 AND 4)</scope>
    <scope>NUCLEOTIDE SEQUENCE [MRNA] OF 282-531 (ISOFORMS 5 AND 6)</scope>
    <scope>ALTERNATIVE SPLICING (ISOFORM 2)</scope>
    <scope>TISSUE SPECIFICITY</scope>
    <source>
        <tissue>Cervix carcinoma</tissue>
        <tissue>Lung</tissue>
        <tissue>Retinoblastoma</tissue>
    </source>
</reference>
<reference key="4">
    <citation type="journal article" date="2006" name="Nature">
        <title>The DNA sequence and biological annotation of human chromosome 1.</title>
        <authorList>
            <person name="Gregory S.G."/>
            <person name="Barlow K.F."/>
            <person name="McLay K.E."/>
            <person name="Kaul R."/>
            <person name="Swarbreck D."/>
            <person name="Dunham A."/>
            <person name="Scott C.E."/>
            <person name="Howe K.L."/>
            <person name="Woodfine K."/>
            <person name="Spencer C.C.A."/>
            <person name="Jones M.C."/>
            <person name="Gillson C."/>
            <person name="Searle S."/>
            <person name="Zhou Y."/>
            <person name="Kokocinski F."/>
            <person name="McDonald L."/>
            <person name="Evans R."/>
            <person name="Phillips K."/>
            <person name="Atkinson A."/>
            <person name="Cooper R."/>
            <person name="Jones C."/>
            <person name="Hall R.E."/>
            <person name="Andrews T.D."/>
            <person name="Lloyd C."/>
            <person name="Ainscough R."/>
            <person name="Almeida J.P."/>
            <person name="Ambrose K.D."/>
            <person name="Anderson F."/>
            <person name="Andrew R.W."/>
            <person name="Ashwell R.I.S."/>
            <person name="Aubin K."/>
            <person name="Babbage A.K."/>
            <person name="Bagguley C.L."/>
            <person name="Bailey J."/>
            <person name="Beasley H."/>
            <person name="Bethel G."/>
            <person name="Bird C.P."/>
            <person name="Bray-Allen S."/>
            <person name="Brown J.Y."/>
            <person name="Brown A.J."/>
            <person name="Buckley D."/>
            <person name="Burton J."/>
            <person name="Bye J."/>
            <person name="Carder C."/>
            <person name="Chapman J.C."/>
            <person name="Clark S.Y."/>
            <person name="Clarke G."/>
            <person name="Clee C."/>
            <person name="Cobley V."/>
            <person name="Collier R.E."/>
            <person name="Corby N."/>
            <person name="Coville G.J."/>
            <person name="Davies J."/>
            <person name="Deadman R."/>
            <person name="Dunn M."/>
            <person name="Earthrowl M."/>
            <person name="Ellington A.G."/>
            <person name="Errington H."/>
            <person name="Frankish A."/>
            <person name="Frankland J."/>
            <person name="French L."/>
            <person name="Garner P."/>
            <person name="Garnett J."/>
            <person name="Gay L."/>
            <person name="Ghori M.R.J."/>
            <person name="Gibson R."/>
            <person name="Gilby L.M."/>
            <person name="Gillett W."/>
            <person name="Glithero R.J."/>
            <person name="Grafham D.V."/>
            <person name="Griffiths C."/>
            <person name="Griffiths-Jones S."/>
            <person name="Grocock R."/>
            <person name="Hammond S."/>
            <person name="Harrison E.S.I."/>
            <person name="Hart E."/>
            <person name="Haugen E."/>
            <person name="Heath P.D."/>
            <person name="Holmes S."/>
            <person name="Holt K."/>
            <person name="Howden P.J."/>
            <person name="Hunt A.R."/>
            <person name="Hunt S.E."/>
            <person name="Hunter G."/>
            <person name="Isherwood J."/>
            <person name="James R."/>
            <person name="Johnson C."/>
            <person name="Johnson D."/>
            <person name="Joy A."/>
            <person name="Kay M."/>
            <person name="Kershaw J.K."/>
            <person name="Kibukawa M."/>
            <person name="Kimberley A.M."/>
            <person name="King A."/>
            <person name="Knights A.J."/>
            <person name="Lad H."/>
            <person name="Laird G."/>
            <person name="Lawlor S."/>
            <person name="Leongamornlert D.A."/>
            <person name="Lloyd D.M."/>
            <person name="Loveland J."/>
            <person name="Lovell J."/>
            <person name="Lush M.J."/>
            <person name="Lyne R."/>
            <person name="Martin S."/>
            <person name="Mashreghi-Mohammadi M."/>
            <person name="Matthews L."/>
            <person name="Matthews N.S.W."/>
            <person name="McLaren S."/>
            <person name="Milne S."/>
            <person name="Mistry S."/>
            <person name="Moore M.J.F."/>
            <person name="Nickerson T."/>
            <person name="O'Dell C.N."/>
            <person name="Oliver K."/>
            <person name="Palmeiri A."/>
            <person name="Palmer S.A."/>
            <person name="Parker A."/>
            <person name="Patel D."/>
            <person name="Pearce A.V."/>
            <person name="Peck A.I."/>
            <person name="Pelan S."/>
            <person name="Phelps K."/>
            <person name="Phillimore B.J."/>
            <person name="Plumb R."/>
            <person name="Rajan J."/>
            <person name="Raymond C."/>
            <person name="Rouse G."/>
            <person name="Saenphimmachak C."/>
            <person name="Sehra H.K."/>
            <person name="Sheridan E."/>
            <person name="Shownkeen R."/>
            <person name="Sims S."/>
            <person name="Skuce C.D."/>
            <person name="Smith M."/>
            <person name="Steward C."/>
            <person name="Subramanian S."/>
            <person name="Sycamore N."/>
            <person name="Tracey A."/>
            <person name="Tromans A."/>
            <person name="Van Helmond Z."/>
            <person name="Wall M."/>
            <person name="Wallis J.M."/>
            <person name="White S."/>
            <person name="Whitehead S.L."/>
            <person name="Wilkinson J.E."/>
            <person name="Willey D.L."/>
            <person name="Williams H."/>
            <person name="Wilming L."/>
            <person name="Wray P.W."/>
            <person name="Wu Z."/>
            <person name="Coulson A."/>
            <person name="Vaudin M."/>
            <person name="Sulston J.E."/>
            <person name="Durbin R.M."/>
            <person name="Hubbard T."/>
            <person name="Wooster R."/>
            <person name="Dunham I."/>
            <person name="Carter N.P."/>
            <person name="McVean G."/>
            <person name="Ross M.T."/>
            <person name="Harrow J."/>
            <person name="Olson M.V."/>
            <person name="Beck S."/>
            <person name="Rogers J."/>
            <person name="Bentley D.R."/>
        </authorList>
    </citation>
    <scope>NUCLEOTIDE SEQUENCE [LARGE SCALE GENOMIC DNA]</scope>
</reference>
<reference key="5">
    <citation type="journal article" date="2004" name="Genome Res.">
        <title>The status, quality, and expansion of the NIH full-length cDNA project: the Mammalian Gene Collection (MGC).</title>
        <authorList>
            <consortium name="The MGC Project Team"/>
        </authorList>
    </citation>
    <scope>NUCLEOTIDE SEQUENCE [LARGE SCALE MRNA] (ISOFORM 2)</scope>
    <source>
        <tissue>Eye</tissue>
    </source>
</reference>
<reference key="6">
    <citation type="journal article" date="2003" name="Mol. Cell">
        <title>The Apaf-1 internal ribosome entry segment attains the correct structural conformation for function via interactions with PTB and unr.</title>
        <authorList>
            <person name="Mitchell S.A."/>
            <person name="Spriggs K.A."/>
            <person name="Coldwell M.J."/>
            <person name="Jackson R.J."/>
            <person name="Willis A.E."/>
        </authorList>
    </citation>
    <scope>FUNCTION</scope>
</reference>
<reference key="7">
    <citation type="journal article" date="2009" name="Anal. Chem.">
        <title>Lys-N and trypsin cover complementary parts of the phosphoproteome in a refined SCX-based approach.</title>
        <authorList>
            <person name="Gauci S."/>
            <person name="Helbig A.O."/>
            <person name="Slijper M."/>
            <person name="Krijgsveld J."/>
            <person name="Heck A.J."/>
            <person name="Mohammed S."/>
        </authorList>
    </citation>
    <scope>ACETYLATION [LARGE SCALE ANALYSIS] AT MET-1</scope>
    <scope>IDENTIFICATION BY MASS SPECTROMETRY [LARGE SCALE ANALYSIS]</scope>
</reference>
<reference key="8">
    <citation type="journal article" date="2009" name="RNA">
        <title>Control of c-myc mRNA stability by IGF2BP1-associated cytoplasmic RNPs.</title>
        <authorList>
            <person name="Weidensdorfer D."/>
            <person name="Stoehr N."/>
            <person name="Baude A."/>
            <person name="Lederer M."/>
            <person name="Koehn M."/>
            <person name="Schierhorn A."/>
            <person name="Buchmeier S."/>
            <person name="Wahle E."/>
            <person name="Huettelmaiery S."/>
        </authorList>
    </citation>
    <scope>IDENTIFICATION IN A MRNP COMPLEX</scope>
    <scope>IDENTIFICATION BY MASS SPECTROMETRY</scope>
</reference>
<reference key="9">
    <citation type="journal article" date="2010" name="Sci. Signal.">
        <title>Quantitative phosphoproteomics reveals widespread full phosphorylation site occupancy during mitosis.</title>
        <authorList>
            <person name="Olsen J.V."/>
            <person name="Vermeulen M."/>
            <person name="Santamaria A."/>
            <person name="Kumar C."/>
            <person name="Miller M.L."/>
            <person name="Jensen L.J."/>
            <person name="Gnad F."/>
            <person name="Cox J."/>
            <person name="Jensen T.S."/>
            <person name="Nigg E.A."/>
            <person name="Brunak S."/>
            <person name="Mann M."/>
        </authorList>
    </citation>
    <scope>PHOSPHORYLATION [LARGE SCALE ANALYSIS] AT SER-308</scope>
    <scope>IDENTIFICATION BY MASS SPECTROMETRY [LARGE SCALE ANALYSIS]</scope>
    <source>
        <tissue>Cervix carcinoma</tissue>
    </source>
</reference>
<reference key="10">
    <citation type="journal article" date="2011" name="Sci. Signal.">
        <title>System-wide temporal characterization of the proteome and phosphoproteome of human embryonic stem cell differentiation.</title>
        <authorList>
            <person name="Rigbolt K.T."/>
            <person name="Prokhorova T.A."/>
            <person name="Akimov V."/>
            <person name="Henningsen J."/>
            <person name="Johansen P.T."/>
            <person name="Kratchmarova I."/>
            <person name="Kassem M."/>
            <person name="Mann M."/>
            <person name="Olsen J.V."/>
            <person name="Blagoev B."/>
        </authorList>
    </citation>
    <scope>IDENTIFICATION BY MASS SPECTROMETRY [LARGE SCALE ANALYSIS]</scope>
</reference>
<reference key="11">
    <citation type="journal article" date="2012" name="Proc. Natl. Acad. Sci. U.S.A.">
        <title>N-terminal acetylome analyses and functional insights of the N-terminal acetyltransferase NatB.</title>
        <authorList>
            <person name="Van Damme P."/>
            <person name="Lasa M."/>
            <person name="Polevoda B."/>
            <person name="Gazquez C."/>
            <person name="Elosegui-Artola A."/>
            <person name="Kim D.S."/>
            <person name="De Juan-Pardo E."/>
            <person name="Demeyer K."/>
            <person name="Hole K."/>
            <person name="Larrea E."/>
            <person name="Timmerman E."/>
            <person name="Prieto J."/>
            <person name="Arnesen T."/>
            <person name="Sherman F."/>
            <person name="Gevaert K."/>
            <person name="Aldabe R."/>
        </authorList>
    </citation>
    <scope>ACETYLATION [LARGE SCALE ANALYSIS] AT MET-1</scope>
    <scope>IDENTIFICATION BY MASS SPECTROMETRY [LARGE SCALE ANALYSIS]</scope>
</reference>
<reference key="12">
    <citation type="submission" date="2005-11" db="PDB data bank">
        <title>Solution structure of RNA-binding domain in PTB-like protein.</title>
        <authorList>
            <consortium name="RIKEN structural genomics initiative (RSGI)"/>
        </authorList>
    </citation>
    <scope>STRUCTURE BY NMR OF 51-138</scope>
</reference>
<comment type="function">
    <text evidence="1 3 5">RNA-binding protein which binds to intronic polypyrimidine tracts and mediates negative regulation of exons splicing. May antagonize in a tissue-specific manner the ability of NOVA1 to activate exon selection. In addition to its function in pre-mRNA splicing, plays also a role in the regulation of translation.</text>
</comment>
<comment type="function">
    <molecule>Isoform 5</molecule>
    <text evidence="4">Reduced affinity for RNA.</text>
</comment>
<comment type="subunit">
    <text evidence="1 3 6">Monomer. Interacts with NOVA1; the interaction is direct. Identified in a mRNP complex, at least composed of DHX9, DDX3X, ELAVL1, HNRNPU, IGF2BP1, ILF3, PABPC1, PCBP2, PTBP2, STAU1, STAU2, SYNCRIP and YBX1. Part of a ternary complex containing KHSRP and HNRPH1 (PubMed:11003644, PubMed:19029303). Interacts with NOVA2; the interaction is direct (By similarity).</text>
</comment>
<comment type="interaction">
    <interactant intactId="EBI-12255608">
        <id>Q9UKA9-2</id>
    </interactant>
    <interactant intactId="EBI-400434">
        <id>P35637</id>
        <label>FUS</label>
    </interactant>
    <organismsDiffer>false</organismsDiffer>
    <experiments>3</experiments>
</comment>
<comment type="interaction">
    <interactant intactId="EBI-12255608">
        <id>Q9UKA9-2</id>
    </interactant>
    <interactant intactId="EBI-352602">
        <id>P43243</id>
        <label>MATR3</label>
    </interactant>
    <organismsDiffer>false</organismsDiffer>
    <experiments>3</experiments>
</comment>
<comment type="interaction">
    <interactant intactId="EBI-12255608">
        <id>Q9UKA9-2</id>
    </interactant>
    <interactant intactId="EBI-721525">
        <id>P98175</id>
        <label>RBM10</label>
    </interactant>
    <organismsDiffer>false</organismsDiffer>
    <experiments>3</experiments>
</comment>
<comment type="interaction">
    <interactant intactId="EBI-12255608">
        <id>Q9UKA9-2</id>
    </interactant>
    <interactant intactId="EBI-11987469">
        <id>Q6ZRY4</id>
        <label>RBPMS2</label>
    </interactant>
    <organismsDiffer>false</organismsDiffer>
    <experiments>3</experiments>
</comment>
<comment type="interaction">
    <interactant intactId="EBI-12255608">
        <id>Q9UKA9-2</id>
    </interactant>
    <interactant intactId="EBI-607085">
        <id>P09012</id>
        <label>SNRPA</label>
    </interactant>
    <organismsDiffer>false</organismsDiffer>
    <experiments>3</experiments>
</comment>
<comment type="interaction">
    <interactant intactId="EBI-12255608">
        <id>Q9UKA9-2</id>
    </interactant>
    <interactant intactId="EBI-5235340">
        <id>Q7Z699</id>
        <label>SPRED1</label>
    </interactant>
    <organismsDiffer>false</organismsDiffer>
    <experiments>3</experiments>
</comment>
<comment type="subcellular location">
    <subcellularLocation>
        <location evidence="1">Nucleus</location>
    </subcellularLocation>
</comment>
<comment type="alternative products">
    <event type="alternative splicing"/>
    <isoform>
        <id>Q9UKA9-1</id>
        <name>1</name>
        <name>nPTB1</name>
        <sequence type="displayed"/>
    </isoform>
    <isoform>
        <id>Q9UKA9-2</id>
        <name>2</name>
        <name>nPTB2</name>
        <name>PTBPLP-L</name>
        <sequence type="described" ref="VSP_018018"/>
    </isoform>
    <isoform>
        <id>Q9UKA9-3</id>
        <name>3</name>
        <name>nPTB3</name>
        <name>PTBPLP-L'</name>
        <sequence type="described" ref="VSP_018015 VSP_018018"/>
    </isoform>
    <isoform>
        <id>Q9UKA9-4</id>
        <name>4</name>
        <name>nPTB4</name>
        <sequence type="described" ref="VSP_018015"/>
    </isoform>
    <isoform>
        <id>Q9UKA9-5</id>
        <name>5</name>
        <name>nPTB5</name>
        <name>nPTB7</name>
        <name>PTBPLP-S</name>
        <sequence type="described" ref="VSP_018016 VSP_018017"/>
    </isoform>
    <isoform>
        <id>Q9UKA9-6</id>
        <name>6</name>
        <name>nPTB6</name>
        <name>nPTB8</name>
        <name>PTBPLP-S'</name>
        <sequence type="described" ref="VSP_018015 VSP_018016 VSP_018017"/>
    </isoform>
</comment>
<comment type="tissue specificity">
    <text evidence="3 4">Mainly expressed in brain although also detected in other tissues like heart and skeletal muscle. Isoform 1 and isoform 2 are specifically expressed in neuronal tissues. Isoform 3 and isoform 4 are expressed in non-neuronal tissues. Isoform 5 and isoform 6 are truncated forms expressed in non-neuronal tissues.</text>
</comment>
<accession>Q9UKA9</accession>
<accession>Q8N0Z1</accession>
<accession>Q8N160</accession>
<accession>Q8NFB0</accession>
<accession>Q8NFB1</accession>
<accession>Q969N9</accession>
<accession>Q96Q76</accession>
<proteinExistence type="evidence at protein level"/>
<gene>
    <name evidence="11" type="primary">PTBP2</name>
    <name type="synonym">NPTB</name>
    <name type="synonym">PTB</name>
    <name type="synonym">PTBLP</name>
</gene>
<dbReference type="EMBL" id="AF176085">
    <property type="protein sequence ID" value="AAF14284.1"/>
    <property type="molecule type" value="mRNA"/>
</dbReference>
<dbReference type="EMBL" id="AB051232">
    <property type="protein sequence ID" value="BAB71742.1"/>
    <property type="molecule type" value="mRNA"/>
</dbReference>
<dbReference type="EMBL" id="AB051233">
    <property type="protein sequence ID" value="BAB71743.1"/>
    <property type="molecule type" value="mRNA"/>
</dbReference>
<dbReference type="EMBL" id="AF530580">
    <property type="protein sequence ID" value="AAM94624.1"/>
    <property type="molecule type" value="mRNA"/>
</dbReference>
<dbReference type="EMBL" id="AF530581">
    <property type="protein sequence ID" value="AAM94625.1"/>
    <property type="molecule type" value="mRNA"/>
</dbReference>
<dbReference type="EMBL" id="AF530582">
    <property type="protein sequence ID" value="AAM94626.1"/>
    <property type="molecule type" value="mRNA"/>
</dbReference>
<dbReference type="EMBL" id="AF530583">
    <property type="protein sequence ID" value="AAM94627.1"/>
    <property type="molecule type" value="mRNA"/>
</dbReference>
<dbReference type="EMBL" id="BK000526">
    <property type="protein sequence ID" value="DAA00060.1"/>
    <property type="molecule type" value="mRNA"/>
</dbReference>
<dbReference type="EMBL" id="AL357150">
    <property type="status" value="NOT_ANNOTATED_CDS"/>
    <property type="molecule type" value="Genomic_DNA"/>
</dbReference>
<dbReference type="EMBL" id="BC016582">
    <property type="protein sequence ID" value="AAH16582.1"/>
    <property type="molecule type" value="mRNA"/>
</dbReference>
<dbReference type="CCDS" id="CCDS72828.1">
    <molecule id="Q9UKA9-3"/>
</dbReference>
<dbReference type="CCDS" id="CCDS72829.1">
    <molecule id="Q9UKA9-4"/>
</dbReference>
<dbReference type="CCDS" id="CCDS72830.1">
    <molecule id="Q9UKA9-2"/>
</dbReference>
<dbReference type="CCDS" id="CCDS754.1">
    <molecule id="Q9UKA9-1"/>
</dbReference>
<dbReference type="RefSeq" id="NP_001287914.1">
    <molecule id="Q9UKA9-3"/>
    <property type="nucleotide sequence ID" value="NM_001300985.2"/>
</dbReference>
<dbReference type="RefSeq" id="NP_001287915.1">
    <property type="nucleotide sequence ID" value="NM_001300986.1"/>
</dbReference>
<dbReference type="RefSeq" id="NP_001287916.1">
    <property type="nucleotide sequence ID" value="NM_001300987.1"/>
</dbReference>
<dbReference type="RefSeq" id="NP_001287917.1">
    <molecule id="Q9UKA9-4"/>
    <property type="nucleotide sequence ID" value="NM_001300988.2"/>
</dbReference>
<dbReference type="RefSeq" id="NP_001287918.1">
    <molecule id="Q9UKA9-2"/>
    <property type="nucleotide sequence ID" value="NM_001300989.2"/>
</dbReference>
<dbReference type="RefSeq" id="NP_001287919.1">
    <property type="nucleotide sequence ID" value="NM_001300990.1"/>
</dbReference>
<dbReference type="RefSeq" id="NP_067013.1">
    <molecule id="Q9UKA9-1"/>
    <property type="nucleotide sequence ID" value="NM_021190.4"/>
</dbReference>
<dbReference type="PDB" id="2CQ1">
    <property type="method" value="NMR"/>
    <property type="chains" value="A=51-138"/>
</dbReference>
<dbReference type="PDB" id="2MJU">
    <property type="method" value="NMR"/>
    <property type="chains" value="A=325-531"/>
</dbReference>
<dbReference type="PDB" id="4CQ1">
    <property type="method" value="X-ray"/>
    <property type="resolution" value="1.69 A"/>
    <property type="chains" value="A/B/C/D/E/F/G/H=336-531"/>
</dbReference>
<dbReference type="PDBsum" id="2CQ1"/>
<dbReference type="PDBsum" id="2MJU"/>
<dbReference type="PDBsum" id="4CQ1"/>
<dbReference type="BMRB" id="Q9UKA9"/>
<dbReference type="SASBDB" id="Q9UKA9"/>
<dbReference type="SMR" id="Q9UKA9"/>
<dbReference type="BioGRID" id="121796">
    <property type="interactions" value="71"/>
</dbReference>
<dbReference type="CORUM" id="Q9UKA9"/>
<dbReference type="FunCoup" id="Q9UKA9">
    <property type="interactions" value="2991"/>
</dbReference>
<dbReference type="IntAct" id="Q9UKA9">
    <property type="interactions" value="38"/>
</dbReference>
<dbReference type="MINT" id="Q9UKA9"/>
<dbReference type="STRING" id="9606.ENSP00000359216"/>
<dbReference type="GlyConnect" id="2061">
    <property type="glycosylation" value="1 N-Linked glycan (1 site)"/>
</dbReference>
<dbReference type="GlyCosmos" id="Q9UKA9">
    <property type="glycosylation" value="1 site, 2 glycans"/>
</dbReference>
<dbReference type="GlyGen" id="Q9UKA9">
    <property type="glycosylation" value="3 sites, 2 N-linked glycans (1 site)"/>
</dbReference>
<dbReference type="iPTMnet" id="Q9UKA9"/>
<dbReference type="MetOSite" id="Q9UKA9"/>
<dbReference type="PhosphoSitePlus" id="Q9UKA9"/>
<dbReference type="SwissPalm" id="Q9UKA9"/>
<dbReference type="BioMuta" id="PTBP2"/>
<dbReference type="DMDM" id="74761983"/>
<dbReference type="REPRODUCTION-2DPAGE" id="IPI00647067"/>
<dbReference type="jPOST" id="Q9UKA9"/>
<dbReference type="MassIVE" id="Q9UKA9"/>
<dbReference type="PaxDb" id="9606-ENSP00000359216"/>
<dbReference type="PeptideAtlas" id="Q9UKA9"/>
<dbReference type="ProteomicsDB" id="84754">
    <molecule id="Q9UKA9-1"/>
</dbReference>
<dbReference type="ProteomicsDB" id="84755">
    <molecule id="Q9UKA9-2"/>
</dbReference>
<dbReference type="ProteomicsDB" id="84756">
    <molecule id="Q9UKA9-3"/>
</dbReference>
<dbReference type="ProteomicsDB" id="84757">
    <molecule id="Q9UKA9-4"/>
</dbReference>
<dbReference type="ProteomicsDB" id="84758">
    <molecule id="Q9UKA9-5"/>
</dbReference>
<dbReference type="ProteomicsDB" id="84759">
    <molecule id="Q9UKA9-6"/>
</dbReference>
<dbReference type="Pumba" id="Q9UKA9"/>
<dbReference type="Antibodypedia" id="19957">
    <property type="antibodies" value="230 antibodies from 31 providers"/>
</dbReference>
<dbReference type="DNASU" id="58155"/>
<dbReference type="Ensembl" id="ENST00000370197.5">
    <molecule id="Q9UKA9-3"/>
    <property type="protein sequence ID" value="ENSP00000359216.1"/>
    <property type="gene ID" value="ENSG00000117569.20"/>
</dbReference>
<dbReference type="Ensembl" id="ENST00000370198.5">
    <molecule id="Q9UKA9-4"/>
    <property type="protein sequence ID" value="ENSP00000359217.1"/>
    <property type="gene ID" value="ENSG00000117569.20"/>
</dbReference>
<dbReference type="Ensembl" id="ENST00000476419.5">
    <molecule id="Q9UKA9-5"/>
    <property type="protein sequence ID" value="ENSP00000501834.1"/>
    <property type="gene ID" value="ENSG00000117569.20"/>
</dbReference>
<dbReference type="Ensembl" id="ENST00000609116.5">
    <molecule id="Q9UKA9-2"/>
    <property type="protein sequence ID" value="ENSP00000477024.1"/>
    <property type="gene ID" value="ENSG00000117569.20"/>
</dbReference>
<dbReference type="Ensembl" id="ENST00000674951.1">
    <molecule id="Q9UKA9-1"/>
    <property type="protein sequence ID" value="ENSP00000502818.1"/>
    <property type="gene ID" value="ENSG00000117569.20"/>
</dbReference>
<dbReference type="GeneID" id="58155"/>
<dbReference type="KEGG" id="hsa:58155"/>
<dbReference type="MANE-Select" id="ENST00000674951.1">
    <property type="protein sequence ID" value="ENSP00000502818.1"/>
    <property type="RefSeq nucleotide sequence ID" value="NM_021190.4"/>
    <property type="RefSeq protein sequence ID" value="NP_067013.1"/>
</dbReference>
<dbReference type="UCSC" id="uc001drn.3">
    <molecule id="Q9UKA9-1"/>
    <property type="organism name" value="human"/>
</dbReference>
<dbReference type="AGR" id="HGNC:17662"/>
<dbReference type="CTD" id="58155"/>
<dbReference type="DisGeNET" id="58155"/>
<dbReference type="GeneCards" id="PTBP2"/>
<dbReference type="HGNC" id="HGNC:17662">
    <property type="gene designation" value="PTBP2"/>
</dbReference>
<dbReference type="HPA" id="ENSG00000117569">
    <property type="expression patterns" value="Low tissue specificity"/>
</dbReference>
<dbReference type="MIM" id="608449">
    <property type="type" value="gene"/>
</dbReference>
<dbReference type="neXtProt" id="NX_Q9UKA9"/>
<dbReference type="OpenTargets" id="ENSG00000117569"/>
<dbReference type="PharmGKB" id="PA33935"/>
<dbReference type="VEuPathDB" id="HostDB:ENSG00000117569"/>
<dbReference type="eggNOG" id="KOG1190">
    <property type="taxonomic scope" value="Eukaryota"/>
</dbReference>
<dbReference type="GeneTree" id="ENSGT01050000244924"/>
<dbReference type="HOGENOM" id="CLU_015171_7_0_1"/>
<dbReference type="InParanoid" id="Q9UKA9"/>
<dbReference type="OMA" id="FKFFQYV"/>
<dbReference type="OrthoDB" id="296632at2759"/>
<dbReference type="PAN-GO" id="Q9UKA9">
    <property type="GO annotations" value="3 GO annotations based on evolutionary models"/>
</dbReference>
<dbReference type="PhylomeDB" id="Q9UKA9"/>
<dbReference type="TreeFam" id="TF319824"/>
<dbReference type="PathwayCommons" id="Q9UKA9"/>
<dbReference type="SignaLink" id="Q9UKA9"/>
<dbReference type="SIGNOR" id="Q9UKA9"/>
<dbReference type="BioGRID-ORCS" id="58155">
    <property type="hits" value="19 hits in 1169 CRISPR screens"/>
</dbReference>
<dbReference type="CD-CODE" id="B5B9A610">
    <property type="entry name" value="PML body"/>
</dbReference>
<dbReference type="ChiTaRS" id="PTBP2">
    <property type="organism name" value="human"/>
</dbReference>
<dbReference type="EvolutionaryTrace" id="Q9UKA9"/>
<dbReference type="GeneWiki" id="PTBP2"/>
<dbReference type="GenomeRNAi" id="58155"/>
<dbReference type="Pharos" id="Q9UKA9">
    <property type="development level" value="Tbio"/>
</dbReference>
<dbReference type="PRO" id="PR:Q9UKA9"/>
<dbReference type="Proteomes" id="UP000005640">
    <property type="component" value="Chromosome 1"/>
</dbReference>
<dbReference type="RNAct" id="Q9UKA9">
    <property type="molecule type" value="protein"/>
</dbReference>
<dbReference type="Bgee" id="ENSG00000117569">
    <property type="expression patterns" value="Expressed in cortical plate and 196 other cell types or tissues"/>
</dbReference>
<dbReference type="ExpressionAtlas" id="Q9UKA9">
    <property type="expression patterns" value="baseline and differential"/>
</dbReference>
<dbReference type="GO" id="GO:0030426">
    <property type="term" value="C:growth cone"/>
    <property type="evidence" value="ECO:0007669"/>
    <property type="project" value="Ensembl"/>
</dbReference>
<dbReference type="GO" id="GO:0043025">
    <property type="term" value="C:neuronal cell body"/>
    <property type="evidence" value="ECO:0007669"/>
    <property type="project" value="Ensembl"/>
</dbReference>
<dbReference type="GO" id="GO:0005634">
    <property type="term" value="C:nucleus"/>
    <property type="evidence" value="ECO:0000318"/>
    <property type="project" value="GO_Central"/>
</dbReference>
<dbReference type="GO" id="GO:0005681">
    <property type="term" value="C:spliceosomal complex"/>
    <property type="evidence" value="ECO:0007669"/>
    <property type="project" value="Ensembl"/>
</dbReference>
<dbReference type="GO" id="GO:0003729">
    <property type="term" value="F:mRNA binding"/>
    <property type="evidence" value="ECO:0000318"/>
    <property type="project" value="GO_Central"/>
</dbReference>
<dbReference type="GO" id="GO:0003723">
    <property type="term" value="F:RNA binding"/>
    <property type="evidence" value="ECO:0007005"/>
    <property type="project" value="UniProtKB"/>
</dbReference>
<dbReference type="GO" id="GO:0021549">
    <property type="term" value="P:cerebellum development"/>
    <property type="evidence" value="ECO:0007669"/>
    <property type="project" value="Ensembl"/>
</dbReference>
<dbReference type="GO" id="GO:0006376">
    <property type="term" value="P:mRNA splice site recognition"/>
    <property type="evidence" value="ECO:0007669"/>
    <property type="project" value="Ensembl"/>
</dbReference>
<dbReference type="GO" id="GO:0033119">
    <property type="term" value="P:negative regulation of RNA splicing"/>
    <property type="evidence" value="ECO:0000314"/>
    <property type="project" value="UniProtKB"/>
</dbReference>
<dbReference type="GO" id="GO:2000177">
    <property type="term" value="P:regulation of neural precursor cell proliferation"/>
    <property type="evidence" value="ECO:0007669"/>
    <property type="project" value="Ensembl"/>
</dbReference>
<dbReference type="GO" id="GO:0043484">
    <property type="term" value="P:regulation of RNA splicing"/>
    <property type="evidence" value="ECO:0000318"/>
    <property type="project" value="GO_Central"/>
</dbReference>
<dbReference type="GO" id="GO:0021510">
    <property type="term" value="P:spinal cord development"/>
    <property type="evidence" value="ECO:0007669"/>
    <property type="project" value="Ensembl"/>
</dbReference>
<dbReference type="CDD" id="cd12778">
    <property type="entry name" value="RRM1_PTBP2"/>
    <property type="match status" value="1"/>
</dbReference>
<dbReference type="CDD" id="cd12783">
    <property type="entry name" value="RRM2_PTBP2"/>
    <property type="match status" value="1"/>
</dbReference>
<dbReference type="CDD" id="cd12696">
    <property type="entry name" value="RRM3_PTBP2"/>
    <property type="match status" value="1"/>
</dbReference>
<dbReference type="CDD" id="cd12702">
    <property type="entry name" value="RRM4_PTBP2"/>
    <property type="match status" value="1"/>
</dbReference>
<dbReference type="FunFam" id="3.30.70.330:FF:000036">
    <property type="entry name" value="polypyrimidine tract-binding protein 1 isoform X2"/>
    <property type="match status" value="1"/>
</dbReference>
<dbReference type="FunFam" id="3.30.70.330:FF:000018">
    <property type="entry name" value="Polypyrimidine tract-binding protein 2 isoform 1"/>
    <property type="match status" value="1"/>
</dbReference>
<dbReference type="FunFam" id="3.30.70.330:FF:000032">
    <property type="entry name" value="Polypyrimidine tract-binding protein 2 isoform 1"/>
    <property type="match status" value="1"/>
</dbReference>
<dbReference type="FunFam" id="3.30.70.330:FF:000173">
    <property type="entry name" value="polypyrimidine tract-binding protein 2 isoform X2"/>
    <property type="match status" value="1"/>
</dbReference>
<dbReference type="Gene3D" id="3.30.70.330">
    <property type="match status" value="4"/>
</dbReference>
<dbReference type="InterPro" id="IPR006536">
    <property type="entry name" value="HnRNP-L/PTB"/>
</dbReference>
<dbReference type="InterPro" id="IPR012677">
    <property type="entry name" value="Nucleotide-bd_a/b_plait_sf"/>
</dbReference>
<dbReference type="InterPro" id="IPR021790">
    <property type="entry name" value="PTBP1-like_RRM2"/>
</dbReference>
<dbReference type="InterPro" id="IPR035002">
    <property type="entry name" value="PTBP2_RRM1"/>
</dbReference>
<dbReference type="InterPro" id="IPR034799">
    <property type="entry name" value="PTBP2_RRM3"/>
</dbReference>
<dbReference type="InterPro" id="IPR034800">
    <property type="entry name" value="PTBP2_RRM4"/>
</dbReference>
<dbReference type="InterPro" id="IPR035979">
    <property type="entry name" value="RBD_domain_sf"/>
</dbReference>
<dbReference type="InterPro" id="IPR000504">
    <property type="entry name" value="RRM_dom"/>
</dbReference>
<dbReference type="NCBIfam" id="TIGR01649">
    <property type="entry name" value="hnRNP-L_PTB"/>
    <property type="match status" value="1"/>
</dbReference>
<dbReference type="PANTHER" id="PTHR15592">
    <property type="entry name" value="MATRIN 3/NUCLEAR PROTEIN 220-RELATED"/>
    <property type="match status" value="1"/>
</dbReference>
<dbReference type="Pfam" id="PF00076">
    <property type="entry name" value="RRM_1"/>
    <property type="match status" value="1"/>
</dbReference>
<dbReference type="Pfam" id="PF13893">
    <property type="entry name" value="RRM_5"/>
    <property type="match status" value="1"/>
</dbReference>
<dbReference type="Pfam" id="PF11835">
    <property type="entry name" value="RRM_8"/>
    <property type="match status" value="1"/>
</dbReference>
<dbReference type="SMART" id="SM00360">
    <property type="entry name" value="RRM"/>
    <property type="match status" value="4"/>
</dbReference>
<dbReference type="SUPFAM" id="SSF54928">
    <property type="entry name" value="RNA-binding domain, RBD"/>
    <property type="match status" value="4"/>
</dbReference>
<dbReference type="PROSITE" id="PS50102">
    <property type="entry name" value="RRM"/>
    <property type="match status" value="4"/>
</dbReference>
<protein>
    <recommendedName>
        <fullName evidence="10">Polypyrimidine tract-binding protein 2</fullName>
    </recommendedName>
    <alternativeName>
        <fullName>Neural polypyrimidine tract-binding protein</fullName>
    </alternativeName>
    <alternativeName>
        <fullName>Neurally-enriched homolog of PTB</fullName>
    </alternativeName>
    <alternativeName>
        <fullName>PTB-like protein</fullName>
    </alternativeName>
</protein>
<keyword id="KW-0002">3D-structure</keyword>
<keyword id="KW-0007">Acetylation</keyword>
<keyword id="KW-0025">Alternative splicing</keyword>
<keyword id="KW-0903">Direct protein sequencing</keyword>
<keyword id="KW-0507">mRNA processing</keyword>
<keyword id="KW-0508">mRNA splicing</keyword>
<keyword id="KW-0539">Nucleus</keyword>
<keyword id="KW-0597">Phosphoprotein</keyword>
<keyword id="KW-1267">Proteomics identification</keyword>
<keyword id="KW-1185">Reference proteome</keyword>
<keyword id="KW-0677">Repeat</keyword>
<keyword id="KW-0694">RNA-binding</keyword>
<sequence>MDGIVTEVAVGVKRGSDELLSGSVLSSPNSNMSSMVVTANGNDSKKFKGEDKMDGAPSRVLHIRKLPGEVTETEVIALGLPFGKVTNILMLKGKNQAFLELATEEAAITMVNYYSAVTPHLRNQPIYIQYSNHKELKTDNTLNQRAQAVLQAVTAVQTANTPLSGTTVSESAVTPAQSPVLRIIIDNMYYPVTLDVLHQIFSKFGAVLKIITFTKNNQFQALLQYGDPVNAQQAKLALDGQNIYNACCTLRIDFSKLVNLNVKYNNDKSRDYTRPDLPSGDGQPALDPAIAAAFAKETSLLAVPGALSPLAIPNAAAAAAAAAAGRVGMPGVSAGGNTVLLVSNLNEEMVTPQSLFTLFGVYGDVQRVKILYNKKDSALIQMADGNQSQLAMNHLNGQKMYGKIIRVTLSKHQTVQLPREGLDDQGLTKDFGNSPLHRFKKPGSKNFQNIFPPSATLHLSNIPPSVAEEDLRTLFANTGGTVKAFKFFQDHKMALLQMATVEEAIQALIDLHNYNLGENHHLRVSFSKSTI</sequence>